<proteinExistence type="inferred from homology"/>
<reference key="1">
    <citation type="journal article" date="2000" name="Proc. Natl. Acad. Sci. U.S.A.">
        <title>Archaeal adaptation to higher temperatures revealed by genomic sequence of Thermoplasma volcanium.</title>
        <authorList>
            <person name="Kawashima T."/>
            <person name="Amano N."/>
            <person name="Koike H."/>
            <person name="Makino S."/>
            <person name="Higuchi S."/>
            <person name="Kawashima-Ohya Y."/>
            <person name="Watanabe K."/>
            <person name="Yamazaki M."/>
            <person name="Kanehori K."/>
            <person name="Kawamoto T."/>
            <person name="Nunoshiba T."/>
            <person name="Yamamoto Y."/>
            <person name="Aramaki H."/>
            <person name="Makino K."/>
            <person name="Suzuki M."/>
        </authorList>
    </citation>
    <scope>NUCLEOTIDE SEQUENCE [LARGE SCALE GENOMIC DNA]</scope>
    <source>
        <strain>ATCC 51530 / DSM 4299 / JCM 9571 / NBRC 15438 / GSS1</strain>
    </source>
</reference>
<evidence type="ECO:0000250" key="1">
    <source>
        <dbReference type="UniProtKB" id="Q8ZWV0"/>
    </source>
</evidence>
<evidence type="ECO:0000250" key="2">
    <source>
        <dbReference type="UniProtKB" id="Q9HIC2"/>
    </source>
</evidence>
<evidence type="ECO:0000255" key="3">
    <source>
        <dbReference type="PROSITE-ProRule" id="PRU00797"/>
    </source>
</evidence>
<evidence type="ECO:0000305" key="4"/>
<feature type="chain" id="PRO_0000227798" description="Bifunctional phosphoglucose/phosphomannose isomerase">
    <location>
        <begin position="1"/>
        <end position="304"/>
    </location>
</feature>
<feature type="domain" description="SIS" evidence="3">
    <location>
        <begin position="16"/>
        <end position="147"/>
    </location>
</feature>
<feature type="active site" description="Proton acceptor" evidence="1">
    <location>
        <position position="196"/>
    </location>
</feature>
<feature type="active site" description="Proton donor" evidence="1">
    <location>
        <position position="212"/>
    </location>
</feature>
<feature type="active site" description="Proton acceptor" evidence="1">
    <location>
        <position position="300"/>
    </location>
</feature>
<feature type="binding site" evidence="1">
    <location>
        <position position="35"/>
    </location>
    <ligand>
        <name>D-fructose 6-phosphate</name>
        <dbReference type="ChEBI" id="CHEBI:61527"/>
    </ligand>
</feature>
<feature type="binding site" evidence="1">
    <location>
        <position position="36"/>
    </location>
    <ligand>
        <name>D-fructose 6-phosphate</name>
        <dbReference type="ChEBI" id="CHEBI:61527"/>
    </ligand>
</feature>
<feature type="binding site" evidence="1">
    <location>
        <position position="74"/>
    </location>
    <ligand>
        <name>D-fructose 6-phosphate</name>
        <dbReference type="ChEBI" id="CHEBI:61527"/>
    </ligand>
</feature>
<feature type="binding site" evidence="1">
    <location>
        <position position="76"/>
    </location>
    <ligand>
        <name>D-fructose 6-phosphate</name>
        <dbReference type="ChEBI" id="CHEBI:61527"/>
    </ligand>
</feature>
<feature type="binding site" evidence="1">
    <location>
        <position position="79"/>
    </location>
    <ligand>
        <name>D-fructose 6-phosphate</name>
        <dbReference type="ChEBI" id="CHEBI:61527"/>
    </ligand>
</feature>
<feature type="binding site" evidence="1">
    <location>
        <position position="122"/>
    </location>
    <ligand>
        <name>D-fructose 6-phosphate</name>
        <dbReference type="ChEBI" id="CHEBI:61527"/>
    </ligand>
</feature>
<feature type="binding site" evidence="1">
    <location>
        <position position="212"/>
    </location>
    <ligand>
        <name>D-fructose 6-phosphate</name>
        <dbReference type="ChEBI" id="CHEBI:61527"/>
    </ligand>
</feature>
<feature type="binding site" evidence="1">
    <location>
        <position position="300"/>
    </location>
    <ligand>
        <name>D-fructose 6-phosphate</name>
        <dbReference type="ChEBI" id="CHEBI:61527"/>
    </ligand>
</feature>
<keyword id="KW-0119">Carbohydrate metabolism</keyword>
<keyword id="KW-0413">Isomerase</keyword>
<gene>
    <name type="ordered locus">TV1464</name>
    <name type="ORF">TVG1514630</name>
</gene>
<dbReference type="EC" id="5.3.1.8" evidence="2"/>
<dbReference type="EC" id="5.3.1.9" evidence="2"/>
<dbReference type="EMBL" id="BA000011">
    <property type="protein sequence ID" value="BAB60606.1"/>
    <property type="molecule type" value="Genomic_DNA"/>
</dbReference>
<dbReference type="RefSeq" id="WP_010917694.1">
    <property type="nucleotide sequence ID" value="NC_002689.2"/>
</dbReference>
<dbReference type="SMR" id="Q978F3"/>
<dbReference type="STRING" id="273116.gene:9382276"/>
<dbReference type="PaxDb" id="273116-14325703"/>
<dbReference type="GeneID" id="1442154"/>
<dbReference type="KEGG" id="tvo:TVG1514630"/>
<dbReference type="eggNOG" id="arCOG00052">
    <property type="taxonomic scope" value="Archaea"/>
</dbReference>
<dbReference type="HOGENOM" id="CLU_059687_0_0_2"/>
<dbReference type="OrthoDB" id="10151at2157"/>
<dbReference type="PhylomeDB" id="Q978F3"/>
<dbReference type="Proteomes" id="UP000001017">
    <property type="component" value="Chromosome"/>
</dbReference>
<dbReference type="GO" id="GO:0097367">
    <property type="term" value="F:carbohydrate derivative binding"/>
    <property type="evidence" value="ECO:0007669"/>
    <property type="project" value="InterPro"/>
</dbReference>
<dbReference type="GO" id="GO:0004347">
    <property type="term" value="F:glucose-6-phosphate isomerase activity"/>
    <property type="evidence" value="ECO:0007669"/>
    <property type="project" value="UniProtKB-EC"/>
</dbReference>
<dbReference type="GO" id="GO:0004476">
    <property type="term" value="F:mannose-6-phosphate isomerase activity"/>
    <property type="evidence" value="ECO:0007669"/>
    <property type="project" value="UniProtKB-EC"/>
</dbReference>
<dbReference type="GO" id="GO:1901135">
    <property type="term" value="P:carbohydrate derivative metabolic process"/>
    <property type="evidence" value="ECO:0007669"/>
    <property type="project" value="InterPro"/>
</dbReference>
<dbReference type="GO" id="GO:0005975">
    <property type="term" value="P:carbohydrate metabolic process"/>
    <property type="evidence" value="ECO:0007669"/>
    <property type="project" value="InterPro"/>
</dbReference>
<dbReference type="CDD" id="cd05017">
    <property type="entry name" value="SIS_PGI_PMI_1"/>
    <property type="match status" value="1"/>
</dbReference>
<dbReference type="CDD" id="cd05637">
    <property type="entry name" value="SIS_PGI_PMI_2"/>
    <property type="match status" value="1"/>
</dbReference>
<dbReference type="Gene3D" id="3.40.50.10490">
    <property type="entry name" value="Glucose-6-phosphate isomerase like protein, domain 1"/>
    <property type="match status" value="2"/>
</dbReference>
<dbReference type="InterPro" id="IPR019490">
    <property type="entry name" value="Glu6P/Mann6P_isomerase_C"/>
</dbReference>
<dbReference type="InterPro" id="IPR001347">
    <property type="entry name" value="SIS_dom"/>
</dbReference>
<dbReference type="InterPro" id="IPR046348">
    <property type="entry name" value="SIS_dom_sf"/>
</dbReference>
<dbReference type="InterPro" id="IPR035484">
    <property type="entry name" value="SIS_PGI/PMI_1"/>
</dbReference>
<dbReference type="NCBIfam" id="TIGR02128">
    <property type="entry name" value="G6PI_arch"/>
    <property type="match status" value="1"/>
</dbReference>
<dbReference type="NCBIfam" id="NF006423">
    <property type="entry name" value="PRK08674.1-2"/>
    <property type="match status" value="1"/>
</dbReference>
<dbReference type="Pfam" id="PF10432">
    <property type="entry name" value="bact-PGI_C"/>
    <property type="match status" value="1"/>
</dbReference>
<dbReference type="Pfam" id="PF01380">
    <property type="entry name" value="SIS"/>
    <property type="match status" value="1"/>
</dbReference>
<dbReference type="SUPFAM" id="SSF53697">
    <property type="entry name" value="SIS domain"/>
    <property type="match status" value="1"/>
</dbReference>
<dbReference type="PROSITE" id="PS51464">
    <property type="entry name" value="SIS"/>
    <property type="match status" value="1"/>
</dbReference>
<organism>
    <name type="scientific">Thermoplasma volcanium (strain ATCC 51530 / DSM 4299 / JCM 9571 / NBRC 15438 / GSS1)</name>
    <dbReference type="NCBI Taxonomy" id="273116"/>
    <lineage>
        <taxon>Archaea</taxon>
        <taxon>Methanobacteriati</taxon>
        <taxon>Thermoplasmatota</taxon>
        <taxon>Thermoplasmata</taxon>
        <taxon>Thermoplasmatales</taxon>
        <taxon>Thermoplasmataceae</taxon>
        <taxon>Thermoplasma</taxon>
    </lineage>
</organism>
<comment type="function">
    <text evidence="2">Dual specificity isomerase that catalyzes the isomerization of both glucose-6-phosphate and mannose-6-phosphate to fructose-6-phosphate.</text>
</comment>
<comment type="catalytic activity">
    <reaction evidence="2">
        <text>alpha-D-glucose 6-phosphate = beta-D-fructose 6-phosphate</text>
        <dbReference type="Rhea" id="RHEA:11816"/>
        <dbReference type="ChEBI" id="CHEBI:57634"/>
        <dbReference type="ChEBI" id="CHEBI:58225"/>
        <dbReference type="EC" id="5.3.1.9"/>
    </reaction>
</comment>
<comment type="catalytic activity">
    <reaction evidence="2">
        <text>D-mannose 6-phosphate = D-fructose 6-phosphate</text>
        <dbReference type="Rhea" id="RHEA:12356"/>
        <dbReference type="ChEBI" id="CHEBI:58735"/>
        <dbReference type="ChEBI" id="CHEBI:61527"/>
        <dbReference type="EC" id="5.3.1.8"/>
    </reaction>
</comment>
<comment type="subunit">
    <text evidence="2">Homodimer.</text>
</comment>
<comment type="similarity">
    <text evidence="4">Belongs to the PGI/PMI family.</text>
</comment>
<accession>Q978F3</accession>
<protein>
    <recommendedName>
        <fullName evidence="2">Bifunctional phosphoglucose/phosphomannose isomerase</fullName>
        <shortName evidence="2">Bifunctional PGI/PMI</shortName>
        <ecNumber evidence="2">5.3.1.8</ecNumber>
        <ecNumber evidence="2">5.3.1.9</ecNumber>
    </recommendedName>
    <alternativeName>
        <fullName>Glucose-6-phosphate isomerase</fullName>
        <shortName>GPI</shortName>
    </alternativeName>
    <alternativeName>
        <fullName>Mannose-6-phosphate isomerase</fullName>
    </alternativeName>
</protein>
<sequence>MQFSEELLTLKDQVRFDKSFKVGKYDKIVIAGMGGSGIAGRIFSEIYDEKPVFLVDDYDIPSFVDDKTEFIAISYSGNTEETISASEEAAKKHANVHAITSGGSLSKMGFDTIIIPSGLQPRSSIGYLLMPLVNTFIKPKIGDVDEAYRLLSETDKDNEEEKSIASEIYNGEHIPVIYGSRPFRAIAYRWKTQFNENAKVLAYSNYFSELNHNDTMPLKDTYRKDEFYFLVFRSDDSRFSKRITVTEKITGNSFRMVDVRGSSLLAKLFYLIHFGDYLTYHLAELRGVDPQDVSLIEKLKKEIA</sequence>
<name>PGMI_THEVO</name>